<protein>
    <recommendedName>
        <fullName evidence="1">Leucine--tRNA ligase</fullName>
        <ecNumber evidence="1">6.1.1.4</ecNumber>
    </recommendedName>
    <alternativeName>
        <fullName evidence="1">Leucyl-tRNA synthetase</fullName>
        <shortName evidence="1">LeuRS</shortName>
    </alternativeName>
</protein>
<sequence length="860" mass="97623">MQEQYRPDLIEAEVQQYWAENKTFKAIKDTNKPKYYCLSMFPYPSGRLHMGHVRNYTIGDVVSRYQRMNGKNVLQPMGWDAFGLPAEGAAIKNKTAPAKWTYENIDYMKNQLKILGFGFDWDREVTTCKPDYYKWEQWFFTELYKKGLVYKKTSTVNWCPNDETVLANEQVHEGCCWRCDTPVEQKEIPQWFIKITDYAEQLLGGLDHLPLWPDQVKTMQRNWIGRSEGVEITFQLANSEDNLTVYTTRPDTFFGVSYVAVAAAHPLAEKAAENNPELAQFIQECKNTKVAEAELATMEKKGMATGVYAIHPLTGEKVPVWVANFVLMHYGTGAVMAVPGHDERDAEFARKYGLPLLNVIKPINGEPLLEHELPYCEHGILFNSGEFNGLDFDAAFNAIADKLEALGKGKRQVNYRLRDWGVSRQRYWGAPIPMLTLENGEVVPAPLQDLPIELPEDVVMDGVKSPIKADPEWAKTTYNGQPALKETDTFDTFMESSWYYARYTSPKFAEAMLDADEANYWLPVDQYIGGIEHATMHLLYFRFFHKLLRDAGFVTSDEPADKLLCQGMVLADAFYYTSPTNERIWVSPTEVTLERDEKGRILKAFDKEGRELVHSGMTKMSKSKNNGIDPQEMVEKYGADTVRLFMMFASPAEMTLEWQESGVEGAKRFLGRLWNLVFEYNKHPAETTVEPTALSSAQKALRRDVHKTIAKVSDDIGRRQTFNTAIAAIMELMNKLTKAPLVEVQDRAIMAEALSAVVRMLYPITPHICFQLWKDLGNTEAIDFAPWVEADAAAMVDDEKLVVVQVNGKVRAKVTVPAEMSEDDIKQVALADSNVAKHLEGLNIVKTIYVPGKLFSFVAK</sequence>
<proteinExistence type="inferred from homology"/>
<keyword id="KW-0030">Aminoacyl-tRNA synthetase</keyword>
<keyword id="KW-0067">ATP-binding</keyword>
<keyword id="KW-0963">Cytoplasm</keyword>
<keyword id="KW-0436">Ligase</keyword>
<keyword id="KW-0547">Nucleotide-binding</keyword>
<keyword id="KW-0648">Protein biosynthesis</keyword>
<keyword id="KW-1185">Reference proteome</keyword>
<accession>P57923</accession>
<gene>
    <name evidence="1" type="primary">leuS</name>
    <name type="ordered locus">PM1214</name>
</gene>
<organism>
    <name type="scientific">Pasteurella multocida (strain Pm70)</name>
    <dbReference type="NCBI Taxonomy" id="272843"/>
    <lineage>
        <taxon>Bacteria</taxon>
        <taxon>Pseudomonadati</taxon>
        <taxon>Pseudomonadota</taxon>
        <taxon>Gammaproteobacteria</taxon>
        <taxon>Pasteurellales</taxon>
        <taxon>Pasteurellaceae</taxon>
        <taxon>Pasteurella</taxon>
    </lineage>
</organism>
<comment type="catalytic activity">
    <reaction evidence="1">
        <text>tRNA(Leu) + L-leucine + ATP = L-leucyl-tRNA(Leu) + AMP + diphosphate</text>
        <dbReference type="Rhea" id="RHEA:11688"/>
        <dbReference type="Rhea" id="RHEA-COMP:9613"/>
        <dbReference type="Rhea" id="RHEA-COMP:9622"/>
        <dbReference type="ChEBI" id="CHEBI:30616"/>
        <dbReference type="ChEBI" id="CHEBI:33019"/>
        <dbReference type="ChEBI" id="CHEBI:57427"/>
        <dbReference type="ChEBI" id="CHEBI:78442"/>
        <dbReference type="ChEBI" id="CHEBI:78494"/>
        <dbReference type="ChEBI" id="CHEBI:456215"/>
        <dbReference type="EC" id="6.1.1.4"/>
    </reaction>
</comment>
<comment type="subcellular location">
    <subcellularLocation>
        <location evidence="1">Cytoplasm</location>
    </subcellularLocation>
</comment>
<comment type="similarity">
    <text evidence="1">Belongs to the class-I aminoacyl-tRNA synthetase family.</text>
</comment>
<dbReference type="EC" id="6.1.1.4" evidence="1"/>
<dbReference type="EMBL" id="AE004439">
    <property type="protein sequence ID" value="AAK03298.1"/>
    <property type="molecule type" value="Genomic_DNA"/>
</dbReference>
<dbReference type="RefSeq" id="WP_010907077.1">
    <property type="nucleotide sequence ID" value="NC_002663.1"/>
</dbReference>
<dbReference type="SMR" id="P57923"/>
<dbReference type="STRING" id="272843.PM1214"/>
<dbReference type="EnsemblBacteria" id="AAK03298">
    <property type="protein sequence ID" value="AAK03298"/>
    <property type="gene ID" value="PM1214"/>
</dbReference>
<dbReference type="KEGG" id="pmu:PM1214"/>
<dbReference type="PATRIC" id="fig|272843.6.peg.1224"/>
<dbReference type="HOGENOM" id="CLU_004427_0_0_6"/>
<dbReference type="OrthoDB" id="9810365at2"/>
<dbReference type="Proteomes" id="UP000000809">
    <property type="component" value="Chromosome"/>
</dbReference>
<dbReference type="GO" id="GO:0005829">
    <property type="term" value="C:cytosol"/>
    <property type="evidence" value="ECO:0007669"/>
    <property type="project" value="TreeGrafter"/>
</dbReference>
<dbReference type="GO" id="GO:0002161">
    <property type="term" value="F:aminoacyl-tRNA deacylase activity"/>
    <property type="evidence" value="ECO:0007669"/>
    <property type="project" value="InterPro"/>
</dbReference>
<dbReference type="GO" id="GO:0005524">
    <property type="term" value="F:ATP binding"/>
    <property type="evidence" value="ECO:0007669"/>
    <property type="project" value="UniProtKB-UniRule"/>
</dbReference>
<dbReference type="GO" id="GO:0004823">
    <property type="term" value="F:leucine-tRNA ligase activity"/>
    <property type="evidence" value="ECO:0007669"/>
    <property type="project" value="UniProtKB-UniRule"/>
</dbReference>
<dbReference type="GO" id="GO:0006429">
    <property type="term" value="P:leucyl-tRNA aminoacylation"/>
    <property type="evidence" value="ECO:0007669"/>
    <property type="project" value="UniProtKB-UniRule"/>
</dbReference>
<dbReference type="CDD" id="cd07958">
    <property type="entry name" value="Anticodon_Ia_Leu_BEm"/>
    <property type="match status" value="1"/>
</dbReference>
<dbReference type="CDD" id="cd00812">
    <property type="entry name" value="LeuRS_core"/>
    <property type="match status" value="1"/>
</dbReference>
<dbReference type="FunFam" id="1.10.730.10:FF:000003">
    <property type="entry name" value="Leucine--tRNA ligase"/>
    <property type="match status" value="1"/>
</dbReference>
<dbReference type="FunFam" id="2.20.28.290:FF:000001">
    <property type="entry name" value="Leucine--tRNA ligase"/>
    <property type="match status" value="1"/>
</dbReference>
<dbReference type="FunFam" id="3.10.20.590:FF:000001">
    <property type="entry name" value="Leucine--tRNA ligase"/>
    <property type="match status" value="1"/>
</dbReference>
<dbReference type="FunFam" id="3.40.50.620:FF:000003">
    <property type="entry name" value="Leucine--tRNA ligase"/>
    <property type="match status" value="1"/>
</dbReference>
<dbReference type="FunFam" id="3.40.50.620:FF:000051">
    <property type="entry name" value="Leucine--tRNA ligase"/>
    <property type="match status" value="1"/>
</dbReference>
<dbReference type="FunFam" id="3.90.740.10:FF:000012">
    <property type="entry name" value="Leucine--tRNA ligase"/>
    <property type="match status" value="1"/>
</dbReference>
<dbReference type="Gene3D" id="2.20.28.290">
    <property type="match status" value="1"/>
</dbReference>
<dbReference type="Gene3D" id="3.10.20.590">
    <property type="match status" value="1"/>
</dbReference>
<dbReference type="Gene3D" id="3.40.50.620">
    <property type="entry name" value="HUPs"/>
    <property type="match status" value="2"/>
</dbReference>
<dbReference type="Gene3D" id="1.10.730.10">
    <property type="entry name" value="Isoleucyl-tRNA Synthetase, Domain 1"/>
    <property type="match status" value="1"/>
</dbReference>
<dbReference type="HAMAP" id="MF_00049_B">
    <property type="entry name" value="Leu_tRNA_synth_B"/>
    <property type="match status" value="1"/>
</dbReference>
<dbReference type="InterPro" id="IPR001412">
    <property type="entry name" value="aa-tRNA-synth_I_CS"/>
</dbReference>
<dbReference type="InterPro" id="IPR002300">
    <property type="entry name" value="aa-tRNA-synth_Ia"/>
</dbReference>
<dbReference type="InterPro" id="IPR002302">
    <property type="entry name" value="Leu-tRNA-ligase"/>
</dbReference>
<dbReference type="InterPro" id="IPR025709">
    <property type="entry name" value="Leu_tRNA-synth_edit"/>
</dbReference>
<dbReference type="InterPro" id="IPR013155">
    <property type="entry name" value="M/V/L/I-tRNA-synth_anticd-bd"/>
</dbReference>
<dbReference type="InterPro" id="IPR015413">
    <property type="entry name" value="Methionyl/Leucyl_tRNA_Synth"/>
</dbReference>
<dbReference type="InterPro" id="IPR014729">
    <property type="entry name" value="Rossmann-like_a/b/a_fold"/>
</dbReference>
<dbReference type="InterPro" id="IPR009080">
    <property type="entry name" value="tRNAsynth_Ia_anticodon-bd"/>
</dbReference>
<dbReference type="InterPro" id="IPR009008">
    <property type="entry name" value="Val/Leu/Ile-tRNA-synth_edit"/>
</dbReference>
<dbReference type="NCBIfam" id="TIGR00396">
    <property type="entry name" value="leuS_bact"/>
    <property type="match status" value="1"/>
</dbReference>
<dbReference type="PANTHER" id="PTHR43740:SF2">
    <property type="entry name" value="LEUCINE--TRNA LIGASE, MITOCHONDRIAL"/>
    <property type="match status" value="1"/>
</dbReference>
<dbReference type="PANTHER" id="PTHR43740">
    <property type="entry name" value="LEUCYL-TRNA SYNTHETASE"/>
    <property type="match status" value="1"/>
</dbReference>
<dbReference type="Pfam" id="PF08264">
    <property type="entry name" value="Anticodon_1"/>
    <property type="match status" value="1"/>
</dbReference>
<dbReference type="Pfam" id="PF00133">
    <property type="entry name" value="tRNA-synt_1"/>
    <property type="match status" value="2"/>
</dbReference>
<dbReference type="Pfam" id="PF13603">
    <property type="entry name" value="tRNA-synt_1_2"/>
    <property type="match status" value="1"/>
</dbReference>
<dbReference type="Pfam" id="PF09334">
    <property type="entry name" value="tRNA-synt_1g"/>
    <property type="match status" value="1"/>
</dbReference>
<dbReference type="PRINTS" id="PR00985">
    <property type="entry name" value="TRNASYNTHLEU"/>
</dbReference>
<dbReference type="SUPFAM" id="SSF47323">
    <property type="entry name" value="Anticodon-binding domain of a subclass of class I aminoacyl-tRNA synthetases"/>
    <property type="match status" value="1"/>
</dbReference>
<dbReference type="SUPFAM" id="SSF52374">
    <property type="entry name" value="Nucleotidylyl transferase"/>
    <property type="match status" value="1"/>
</dbReference>
<dbReference type="SUPFAM" id="SSF50677">
    <property type="entry name" value="ValRS/IleRS/LeuRS editing domain"/>
    <property type="match status" value="1"/>
</dbReference>
<dbReference type="PROSITE" id="PS00178">
    <property type="entry name" value="AA_TRNA_LIGASE_I"/>
    <property type="match status" value="1"/>
</dbReference>
<name>SYL_PASMU</name>
<feature type="chain" id="PRO_0000152059" description="Leucine--tRNA ligase">
    <location>
        <begin position="1"/>
        <end position="860"/>
    </location>
</feature>
<feature type="short sequence motif" description="'HIGH' region">
    <location>
        <begin position="42"/>
        <end position="52"/>
    </location>
</feature>
<feature type="short sequence motif" description="'KMSKS' region">
    <location>
        <begin position="619"/>
        <end position="623"/>
    </location>
</feature>
<feature type="binding site" evidence="1">
    <location>
        <position position="622"/>
    </location>
    <ligand>
        <name>ATP</name>
        <dbReference type="ChEBI" id="CHEBI:30616"/>
    </ligand>
</feature>
<reference key="1">
    <citation type="journal article" date="2001" name="Proc. Natl. Acad. Sci. U.S.A.">
        <title>Complete genomic sequence of Pasteurella multocida Pm70.</title>
        <authorList>
            <person name="May B.J."/>
            <person name="Zhang Q."/>
            <person name="Li L.L."/>
            <person name="Paustian M.L."/>
            <person name="Whittam T.S."/>
            <person name="Kapur V."/>
        </authorList>
    </citation>
    <scope>NUCLEOTIDE SEQUENCE [LARGE SCALE GENOMIC DNA]</scope>
    <source>
        <strain>Pm70</strain>
    </source>
</reference>
<evidence type="ECO:0000255" key="1">
    <source>
        <dbReference type="HAMAP-Rule" id="MF_00049"/>
    </source>
</evidence>